<reference key="1">
    <citation type="journal article" date="2011" name="PLoS Genet.">
        <title>Comparative genomic analysis of human fungal pathogens causing paracoccidioidomycosis.</title>
        <authorList>
            <person name="Desjardins C.A."/>
            <person name="Champion M.D."/>
            <person name="Holder J.W."/>
            <person name="Muszewska A."/>
            <person name="Goldberg J."/>
            <person name="Bailao A.M."/>
            <person name="Brigido M.M."/>
            <person name="Ferreira M.E."/>
            <person name="Garcia A.M."/>
            <person name="Grynberg M."/>
            <person name="Gujja S."/>
            <person name="Heiman D.I."/>
            <person name="Henn M.R."/>
            <person name="Kodira C.D."/>
            <person name="Leon-Narvaez H."/>
            <person name="Longo L.V.G."/>
            <person name="Ma L.-J."/>
            <person name="Malavazi I."/>
            <person name="Matsuo A.L."/>
            <person name="Morais F.V."/>
            <person name="Pereira M."/>
            <person name="Rodriguez-Brito S."/>
            <person name="Sakthikumar S."/>
            <person name="Salem-Izacc S.M."/>
            <person name="Sykes S.M."/>
            <person name="Teixeira M.M."/>
            <person name="Vallejo M.C."/>
            <person name="Walter M.E."/>
            <person name="Yandava C."/>
            <person name="Young S."/>
            <person name="Zeng Q."/>
            <person name="Zucker J."/>
            <person name="Felipe M.S."/>
            <person name="Goldman G.H."/>
            <person name="Haas B.J."/>
            <person name="McEwen J.G."/>
            <person name="Nino-Vega G."/>
            <person name="Puccia R."/>
            <person name="San-Blas G."/>
            <person name="Soares C.M."/>
            <person name="Birren B.W."/>
            <person name="Cuomo C.A."/>
        </authorList>
    </citation>
    <scope>NUCLEOTIDE SEQUENCE [LARGE SCALE GENOMIC DNA]</scope>
    <source>
        <strain>Pb18</strain>
    </source>
</reference>
<name>DAPB_PARBD</name>
<dbReference type="EC" id="3.4.14.5"/>
<dbReference type="EMBL" id="KN275957">
    <property type="protein sequence ID" value="EEH43764.1"/>
    <property type="molecule type" value="Genomic_DNA"/>
</dbReference>
<dbReference type="RefSeq" id="XP_010756181.1">
    <property type="nucleotide sequence ID" value="XM_010757879.1"/>
</dbReference>
<dbReference type="SMR" id="C1FZL3"/>
<dbReference type="FunCoup" id="C1FZL3">
    <property type="interactions" value="286"/>
</dbReference>
<dbReference type="STRING" id="502780.C1FZL3"/>
<dbReference type="ESTHER" id="parba-dapb">
    <property type="family name" value="DPP4N_Peptidase_S9"/>
</dbReference>
<dbReference type="MEROPS" id="S09.006"/>
<dbReference type="GlyCosmos" id="C1FZL3">
    <property type="glycosylation" value="7 sites, No reported glycans"/>
</dbReference>
<dbReference type="GeneID" id="22579951"/>
<dbReference type="KEGG" id="pbn:PADG_00053"/>
<dbReference type="VEuPathDB" id="FungiDB:PADG_00053"/>
<dbReference type="eggNOG" id="KOG2100">
    <property type="taxonomic scope" value="Eukaryota"/>
</dbReference>
<dbReference type="HOGENOM" id="CLU_006105_0_1_1"/>
<dbReference type="InParanoid" id="C1FZL3"/>
<dbReference type="OMA" id="MRTPQEN"/>
<dbReference type="OrthoDB" id="28823at33183"/>
<dbReference type="Proteomes" id="UP000001628">
    <property type="component" value="Unassembled WGS sequence"/>
</dbReference>
<dbReference type="GO" id="GO:0000329">
    <property type="term" value="C:fungal-type vacuole membrane"/>
    <property type="evidence" value="ECO:0007669"/>
    <property type="project" value="EnsemblFungi"/>
</dbReference>
<dbReference type="GO" id="GO:0005886">
    <property type="term" value="C:plasma membrane"/>
    <property type="evidence" value="ECO:0007669"/>
    <property type="project" value="TreeGrafter"/>
</dbReference>
<dbReference type="GO" id="GO:0004177">
    <property type="term" value="F:aminopeptidase activity"/>
    <property type="evidence" value="ECO:0007669"/>
    <property type="project" value="UniProtKB-KW"/>
</dbReference>
<dbReference type="GO" id="GO:0008239">
    <property type="term" value="F:dipeptidyl-peptidase activity"/>
    <property type="evidence" value="ECO:0007669"/>
    <property type="project" value="UniProtKB-EC"/>
</dbReference>
<dbReference type="GO" id="GO:0004252">
    <property type="term" value="F:serine-type endopeptidase activity"/>
    <property type="evidence" value="ECO:0007669"/>
    <property type="project" value="InterPro"/>
</dbReference>
<dbReference type="GO" id="GO:0006508">
    <property type="term" value="P:proteolysis"/>
    <property type="evidence" value="ECO:0007669"/>
    <property type="project" value="UniProtKB-KW"/>
</dbReference>
<dbReference type="FunFam" id="3.40.50.1820:FF:000003">
    <property type="entry name" value="Dipeptidyl peptidase 4"/>
    <property type="match status" value="1"/>
</dbReference>
<dbReference type="Gene3D" id="3.40.50.1820">
    <property type="entry name" value="alpha/beta hydrolase"/>
    <property type="match status" value="1"/>
</dbReference>
<dbReference type="Gene3D" id="2.140.10.30">
    <property type="entry name" value="Dipeptidylpeptidase IV, N-terminal domain"/>
    <property type="match status" value="1"/>
</dbReference>
<dbReference type="InterPro" id="IPR029058">
    <property type="entry name" value="AB_hydrolase_fold"/>
</dbReference>
<dbReference type="InterPro" id="IPR002471">
    <property type="entry name" value="Pept_S9_AS"/>
</dbReference>
<dbReference type="InterPro" id="IPR001375">
    <property type="entry name" value="Peptidase_S9_cat"/>
</dbReference>
<dbReference type="InterPro" id="IPR002469">
    <property type="entry name" value="Peptidase_S9B_N"/>
</dbReference>
<dbReference type="InterPro" id="IPR050278">
    <property type="entry name" value="Serine_Prot_S9B/DPPIV"/>
</dbReference>
<dbReference type="PANTHER" id="PTHR11731:SF200">
    <property type="entry name" value="DIPEPTIDYL PEPTIDASE 10, ISOFORM B"/>
    <property type="match status" value="1"/>
</dbReference>
<dbReference type="PANTHER" id="PTHR11731">
    <property type="entry name" value="PROTEASE FAMILY S9B,C DIPEPTIDYL-PEPTIDASE IV-RELATED"/>
    <property type="match status" value="1"/>
</dbReference>
<dbReference type="Pfam" id="PF00930">
    <property type="entry name" value="DPPIV_N"/>
    <property type="match status" value="1"/>
</dbReference>
<dbReference type="Pfam" id="PF00326">
    <property type="entry name" value="Peptidase_S9"/>
    <property type="match status" value="1"/>
</dbReference>
<dbReference type="SUPFAM" id="SSF53474">
    <property type="entry name" value="alpha/beta-Hydrolases"/>
    <property type="match status" value="1"/>
</dbReference>
<dbReference type="SUPFAM" id="SSF82171">
    <property type="entry name" value="DPP6 N-terminal domain-like"/>
    <property type="match status" value="1"/>
</dbReference>
<dbReference type="PROSITE" id="PS00708">
    <property type="entry name" value="PRO_ENDOPEP_SER"/>
    <property type="match status" value="1"/>
</dbReference>
<feature type="chain" id="PRO_0000412154" description="Probable dipeptidyl-aminopeptidase B">
    <location>
        <begin position="1"/>
        <end position="912"/>
    </location>
</feature>
<feature type="topological domain" description="Cytoplasmic" evidence="2">
    <location>
        <begin position="1"/>
        <end position="92"/>
    </location>
</feature>
<feature type="transmembrane region" description="Helical; Signal-anchor for type II membrane protein" evidence="2">
    <location>
        <begin position="93"/>
        <end position="113"/>
    </location>
</feature>
<feature type="topological domain" description="Vacuolar" evidence="2">
    <location>
        <begin position="114"/>
        <end position="912"/>
    </location>
</feature>
<feature type="region of interest" description="Disordered" evidence="4">
    <location>
        <begin position="1"/>
        <end position="30"/>
    </location>
</feature>
<feature type="region of interest" description="Disordered" evidence="4">
    <location>
        <begin position="48"/>
        <end position="68"/>
    </location>
</feature>
<feature type="compositionally biased region" description="Basic and acidic residues" evidence="4">
    <location>
        <begin position="7"/>
        <end position="25"/>
    </location>
</feature>
<feature type="compositionally biased region" description="Basic and acidic residues" evidence="4">
    <location>
        <begin position="54"/>
        <end position="67"/>
    </location>
</feature>
<feature type="active site" description="Charge relay system" evidence="3">
    <location>
        <position position="751"/>
    </location>
</feature>
<feature type="active site" description="Charge relay system" evidence="3">
    <location>
        <position position="828"/>
    </location>
</feature>
<feature type="active site" description="Charge relay system" evidence="3">
    <location>
        <position position="861"/>
    </location>
</feature>
<feature type="glycosylation site" description="N-linked (GlcNAc...) asparagine" evidence="2">
    <location>
        <position position="130"/>
    </location>
</feature>
<feature type="glycosylation site" description="N-linked (GlcNAc...) asparagine" evidence="2">
    <location>
        <position position="210"/>
    </location>
</feature>
<feature type="glycosylation site" description="N-linked (GlcNAc...) asparagine" evidence="2">
    <location>
        <position position="346"/>
    </location>
</feature>
<feature type="glycosylation site" description="N-linked (GlcNAc...) asparagine" evidence="2">
    <location>
        <position position="569"/>
    </location>
</feature>
<feature type="glycosylation site" description="N-linked (GlcNAc...) asparagine" evidence="2">
    <location>
        <position position="656"/>
    </location>
</feature>
<feature type="glycosylation site" description="N-linked (GlcNAc...) asparagine" evidence="2">
    <location>
        <position position="810"/>
    </location>
</feature>
<feature type="glycosylation site" description="N-linked (GlcNAc...) asparagine" evidence="2">
    <location>
        <position position="897"/>
    </location>
</feature>
<protein>
    <recommendedName>
        <fullName>Probable dipeptidyl-aminopeptidase B</fullName>
        <shortName>DPAP B</shortName>
        <ecNumber>3.4.14.5</ecNumber>
    </recommendedName>
</protein>
<evidence type="ECO:0000250" key="1"/>
<evidence type="ECO:0000255" key="2"/>
<evidence type="ECO:0000255" key="3">
    <source>
        <dbReference type="PROSITE-ProRule" id="PRU10084"/>
    </source>
</evidence>
<evidence type="ECO:0000256" key="4">
    <source>
        <dbReference type="SAM" id="MobiDB-lite"/>
    </source>
</evidence>
<evidence type="ECO:0000305" key="5"/>
<proteinExistence type="inferred from homology"/>
<keyword id="KW-0031">Aminopeptidase</keyword>
<keyword id="KW-0325">Glycoprotein</keyword>
<keyword id="KW-0378">Hydrolase</keyword>
<keyword id="KW-0472">Membrane</keyword>
<keyword id="KW-0645">Protease</keyword>
<keyword id="KW-1185">Reference proteome</keyword>
<keyword id="KW-0720">Serine protease</keyword>
<keyword id="KW-0735">Signal-anchor</keyword>
<keyword id="KW-0812">Transmembrane</keyword>
<keyword id="KW-1133">Transmembrane helix</keyword>
<keyword id="KW-0926">Vacuole</keyword>
<gene>
    <name type="primary">DAPB</name>
    <name type="ORF">PADG_00053</name>
</gene>
<comment type="function">
    <text evidence="1">Type IV dipeptidyl-peptidase which removes N-terminal dipeptides sequentially from polypeptides having unsubstituted N-termini provided that the penultimate residue is proline.</text>
</comment>
<comment type="catalytic activity">
    <reaction evidence="3">
        <text>Release of an N-terminal dipeptide, Xaa-Yaa-|-Zaa-, from a polypeptide, preferentially when Yaa is Pro, provided Zaa is neither Pro nor hydroxyproline.</text>
        <dbReference type="EC" id="3.4.14.5"/>
    </reaction>
</comment>
<comment type="subcellular location">
    <subcellularLocation>
        <location evidence="1">Vacuole membrane</location>
        <topology evidence="1">Single-pass type II membrane protein</topology>
    </subcellularLocation>
    <text evidence="1">Lysosome-like vacuoles.</text>
</comment>
<comment type="similarity">
    <text evidence="5">Belongs to the peptidase S9B family.</text>
</comment>
<organism>
    <name type="scientific">Paracoccidioides brasiliensis (strain Pb18)</name>
    <dbReference type="NCBI Taxonomy" id="502780"/>
    <lineage>
        <taxon>Eukaryota</taxon>
        <taxon>Fungi</taxon>
        <taxon>Dikarya</taxon>
        <taxon>Ascomycota</taxon>
        <taxon>Pezizomycotina</taxon>
        <taxon>Eurotiomycetes</taxon>
        <taxon>Eurotiomycetidae</taxon>
        <taxon>Onygenales</taxon>
        <taxon>Ajellomycetaceae</taxon>
        <taxon>Paracoccidioides</taxon>
    </lineage>
</organism>
<accession>C1FZL3</accession>
<sequence>MAAEKGGSSDEERKPLTRGSMEYRDSSNSLHYSSSAASLSLAVIDRINGSTHDTGPDEIGRGDRDYSDDGEYDLEEADYIPSGGKPVQKKVKIVLGFLLFLCLSGWSLAFVLFLFGGHESSKTSIVYEDNISDTGSQGIKITLDEVFDGTWSPNSRDISWIPGPNGEDGLLLEKGASISNGYLRVEDIVSRKDPKSSKKPIVLMQKAYFNVSGEAVFPSRVWPSPDLKTVLVLSNEEKNWRHSFTGKYWLFDVESQTGQPLDPAAKDQRVQLASWSPRSDAVVFTRDNNMFLRKLSSNEVIKITTNGGVNLFYGVPDWVYEEEVFSGNSVTWWADDGEYIAFLRTNESSVPEYPVQYFVSRPNGEIPKPGGESYPETRKIKYPKAGAPNPIVDLQFFDVGKDEVFSVDIKGDFADSNRLIIEVVWASNGKVIVRSTNRESDVLHVAVIDVLSRTGKIVRKEDINALDGGWVEPSQTTRFIPADPDNGRLNDGYIDTVIYEGRDQLAYYTPIDNPKPIVLTNGHSEVVQAPSGVDLKRGLVYFVVAGNEPWERHIYSVNFDGTSLQPVTNVSESSYYDVSFSNGAGYAFLKYAGPQVPWQKVISTPANEVTFEETIEENNHLSERLRQYTLESKIYQYIDIDGFSLPVLERRPPNFNQTKKYPVLFYLYGGPGSQTVKKKFNVDFQSYVAANLGYIVVTVDGRGTGFIGRKARCIIRGNLGHFESLDQIQAAKIWAAKPYVDESRISIWGWSYGGFMALKTIEQDGGRTFKYGIAVAPVTDWRYYDSIYTERYMHTPQRNPGGYDNAAISNTTALANNIRFLVMHGTADDNVHIQNSLTFIDKLDVNNVHNYDVHFFPDSDHSIYFHNAHKIVYSRLADWLVNAFNGEWLKTYDPTPNDSILRRAATWVGMSI</sequence>